<accession>Q3A4B0</accession>
<comment type="function">
    <text evidence="1">Required for maturation of 30S ribosomal subunits.</text>
</comment>
<comment type="subcellular location">
    <subcellularLocation>
        <location evidence="1">Cytoplasm</location>
    </subcellularLocation>
</comment>
<comment type="similarity">
    <text evidence="1">Belongs to the RimP family.</text>
</comment>
<keyword id="KW-0963">Cytoplasm</keyword>
<keyword id="KW-1185">Reference proteome</keyword>
<keyword id="KW-0690">Ribosome biogenesis</keyword>
<protein>
    <recommendedName>
        <fullName evidence="1">Ribosome maturation factor RimP</fullName>
    </recommendedName>
</protein>
<gene>
    <name evidence="1" type="primary">rimP</name>
    <name type="ordered locus">Pcar_1552</name>
</gene>
<evidence type="ECO:0000255" key="1">
    <source>
        <dbReference type="HAMAP-Rule" id="MF_01077"/>
    </source>
</evidence>
<sequence length="162" mass="18193">MTQQTVLDKIRSLVLPVLEEKGRELVDVEYRREGQGWILRLYIDQPGGVTLDACAEVSREVGVLLEVEDPIDTAYNLEVSSPGLDRPLTKLEDYERFAGRLAKVKSRVSIDVDGKGRGRKTFVGVLAGLSEGKVVLELKDKNGFRMEIPFEDIEKANLEIEF</sequence>
<name>RIMP_SYNC1</name>
<reference key="1">
    <citation type="submission" date="2005-10" db="EMBL/GenBank/DDBJ databases">
        <title>Complete sequence of Pelobacter carbinolicus DSM 2380.</title>
        <authorList>
            <person name="Copeland A."/>
            <person name="Lucas S."/>
            <person name="Lapidus A."/>
            <person name="Barry K."/>
            <person name="Detter J.C."/>
            <person name="Glavina T."/>
            <person name="Hammon N."/>
            <person name="Israni S."/>
            <person name="Pitluck S."/>
            <person name="Chertkov O."/>
            <person name="Schmutz J."/>
            <person name="Larimer F."/>
            <person name="Land M."/>
            <person name="Kyrpides N."/>
            <person name="Ivanova N."/>
            <person name="Richardson P."/>
        </authorList>
    </citation>
    <scope>NUCLEOTIDE SEQUENCE [LARGE SCALE GENOMIC DNA]</scope>
    <source>
        <strain>DSM 2380 / NBRC 103641 / GraBd1</strain>
    </source>
</reference>
<feature type="chain" id="PRO_0000229259" description="Ribosome maturation factor RimP">
    <location>
        <begin position="1"/>
        <end position="162"/>
    </location>
</feature>
<organism>
    <name type="scientific">Syntrophotalea carbinolica (strain DSM 2380 / NBRC 103641 / GraBd1)</name>
    <name type="common">Pelobacter carbinolicus</name>
    <dbReference type="NCBI Taxonomy" id="338963"/>
    <lineage>
        <taxon>Bacteria</taxon>
        <taxon>Pseudomonadati</taxon>
        <taxon>Thermodesulfobacteriota</taxon>
        <taxon>Desulfuromonadia</taxon>
        <taxon>Desulfuromonadales</taxon>
        <taxon>Syntrophotaleaceae</taxon>
        <taxon>Syntrophotalea</taxon>
    </lineage>
</organism>
<dbReference type="EMBL" id="CP000142">
    <property type="protein sequence ID" value="ABA88797.1"/>
    <property type="molecule type" value="Genomic_DNA"/>
</dbReference>
<dbReference type="RefSeq" id="WP_011341280.1">
    <property type="nucleotide sequence ID" value="NC_007498.2"/>
</dbReference>
<dbReference type="SMR" id="Q3A4B0"/>
<dbReference type="STRING" id="338963.Pcar_1552"/>
<dbReference type="KEGG" id="pca:Pcar_1552"/>
<dbReference type="eggNOG" id="COG0779">
    <property type="taxonomic scope" value="Bacteria"/>
</dbReference>
<dbReference type="HOGENOM" id="CLU_070525_2_2_7"/>
<dbReference type="OrthoDB" id="9805006at2"/>
<dbReference type="Proteomes" id="UP000002534">
    <property type="component" value="Chromosome"/>
</dbReference>
<dbReference type="GO" id="GO:0005829">
    <property type="term" value="C:cytosol"/>
    <property type="evidence" value="ECO:0007669"/>
    <property type="project" value="TreeGrafter"/>
</dbReference>
<dbReference type="GO" id="GO:0000028">
    <property type="term" value="P:ribosomal small subunit assembly"/>
    <property type="evidence" value="ECO:0007669"/>
    <property type="project" value="TreeGrafter"/>
</dbReference>
<dbReference type="GO" id="GO:0006412">
    <property type="term" value="P:translation"/>
    <property type="evidence" value="ECO:0007669"/>
    <property type="project" value="TreeGrafter"/>
</dbReference>
<dbReference type="CDD" id="cd01734">
    <property type="entry name" value="YlxS_C"/>
    <property type="match status" value="1"/>
</dbReference>
<dbReference type="FunFam" id="3.30.300.70:FF:000001">
    <property type="entry name" value="Ribosome maturation factor RimP"/>
    <property type="match status" value="1"/>
</dbReference>
<dbReference type="Gene3D" id="2.30.30.180">
    <property type="entry name" value="Ribosome maturation factor RimP, C-terminal domain"/>
    <property type="match status" value="1"/>
</dbReference>
<dbReference type="Gene3D" id="3.30.300.70">
    <property type="entry name" value="RimP-like superfamily, N-terminal"/>
    <property type="match status" value="1"/>
</dbReference>
<dbReference type="HAMAP" id="MF_01077">
    <property type="entry name" value="RimP"/>
    <property type="match status" value="1"/>
</dbReference>
<dbReference type="InterPro" id="IPR003728">
    <property type="entry name" value="Ribosome_maturation_RimP"/>
</dbReference>
<dbReference type="InterPro" id="IPR028998">
    <property type="entry name" value="RimP_C"/>
</dbReference>
<dbReference type="InterPro" id="IPR036847">
    <property type="entry name" value="RimP_C_sf"/>
</dbReference>
<dbReference type="InterPro" id="IPR028989">
    <property type="entry name" value="RimP_N"/>
</dbReference>
<dbReference type="InterPro" id="IPR035956">
    <property type="entry name" value="RimP_N_sf"/>
</dbReference>
<dbReference type="PANTHER" id="PTHR33867">
    <property type="entry name" value="RIBOSOME MATURATION FACTOR RIMP"/>
    <property type="match status" value="1"/>
</dbReference>
<dbReference type="PANTHER" id="PTHR33867:SF1">
    <property type="entry name" value="RIBOSOME MATURATION FACTOR RIMP"/>
    <property type="match status" value="1"/>
</dbReference>
<dbReference type="Pfam" id="PF17384">
    <property type="entry name" value="DUF150_C"/>
    <property type="match status" value="1"/>
</dbReference>
<dbReference type="Pfam" id="PF02576">
    <property type="entry name" value="RimP_N"/>
    <property type="match status" value="1"/>
</dbReference>
<dbReference type="SUPFAM" id="SSF74942">
    <property type="entry name" value="YhbC-like, C-terminal domain"/>
    <property type="match status" value="1"/>
</dbReference>
<dbReference type="SUPFAM" id="SSF75420">
    <property type="entry name" value="YhbC-like, N-terminal domain"/>
    <property type="match status" value="1"/>
</dbReference>
<proteinExistence type="inferred from homology"/>